<sequence>MEILRIEPTPSPNTMKVVLSYTREDKLSNTYKKVEETQPEFINQLLSIDGITSIFHVMNFLAVDKSPKADWEVILPDIKAAFSDANKVLESVNEPQIDNHFGEIKAELLTFKGIPYQIKLTSADQELREQLPQTYVDQMTQAQTAHDNIVFMRKWLDLGNRYGNIEEVMDGVLEEVLATYPESQLPVLVKHALEENHATNNYHFYRHVSLDEYHATDNWKTRLRTLNHFPKPTFEDIPLLDLALSDEKVPVRRQAIVLLGMIESKEILPYLYKGLRDKSPAVRRTAGDCISDLGYPEALPEMVLLLDDPQKIVRWRAAMFIFDEGNAEQLPALKAHINDNAFEVKLQIEMAISRIENGDEALGSVWKQMANRTI</sequence>
<keyword id="KW-0843">Virulence</keyword>
<proteinExistence type="inferred from homology"/>
<comment type="function">
    <text evidence="1">Required for hemolysin production.</text>
</comment>
<comment type="similarity">
    <text evidence="2">Belongs to the CvfC family.</text>
</comment>
<gene>
    <name type="primary">cvfC</name>
    <name type="ordered locus">SAB1284c</name>
</gene>
<protein>
    <recommendedName>
        <fullName>Conserved virulence factor C</fullName>
    </recommendedName>
</protein>
<name>CVFC_STAAB</name>
<accession>Q2YY38</accession>
<dbReference type="EMBL" id="AJ938182">
    <property type="protein sequence ID" value="CAI80973.1"/>
    <property type="molecule type" value="Genomic_DNA"/>
</dbReference>
<dbReference type="RefSeq" id="WP_000404637.1">
    <property type="nucleotide sequence ID" value="NC_007622.1"/>
</dbReference>
<dbReference type="SMR" id="Q2YY38"/>
<dbReference type="KEGG" id="sab:SAB1284c"/>
<dbReference type="HOGENOM" id="CLU_733295_0_0_9"/>
<dbReference type="GO" id="GO:0016491">
    <property type="term" value="F:oxidoreductase activity"/>
    <property type="evidence" value="ECO:0007669"/>
    <property type="project" value="TreeGrafter"/>
</dbReference>
<dbReference type="Gene3D" id="1.25.10.10">
    <property type="entry name" value="Leucine-rich Repeat Variant"/>
    <property type="match status" value="1"/>
</dbReference>
<dbReference type="Gene3D" id="3.30.1370.70">
    <property type="entry name" value="Scaffold protein Nfu/NifU, N-terminal domain"/>
    <property type="match status" value="1"/>
</dbReference>
<dbReference type="InterPro" id="IPR011989">
    <property type="entry name" value="ARM-like"/>
</dbReference>
<dbReference type="InterPro" id="IPR016024">
    <property type="entry name" value="ARM-type_fold"/>
</dbReference>
<dbReference type="InterPro" id="IPR014824">
    <property type="entry name" value="Nfu/NifU_N"/>
</dbReference>
<dbReference type="InterPro" id="IPR036498">
    <property type="entry name" value="Nfu/NifU_N_sf"/>
</dbReference>
<dbReference type="InterPro" id="IPR004155">
    <property type="entry name" value="PBS_lyase_HEAT"/>
</dbReference>
<dbReference type="InterPro" id="IPR025989">
    <property type="entry name" value="Virulence_F_dom"/>
</dbReference>
<dbReference type="PANTHER" id="PTHR12697:SF37">
    <property type="entry name" value="CONSERVED VIRULENCE FACTOR C"/>
    <property type="match status" value="1"/>
</dbReference>
<dbReference type="PANTHER" id="PTHR12697">
    <property type="entry name" value="PBS LYASE HEAT-LIKE PROTEIN"/>
    <property type="match status" value="1"/>
</dbReference>
<dbReference type="Pfam" id="PF13646">
    <property type="entry name" value="HEAT_2"/>
    <property type="match status" value="1"/>
</dbReference>
<dbReference type="Pfam" id="PF08712">
    <property type="entry name" value="Nfu_N"/>
    <property type="match status" value="1"/>
</dbReference>
<dbReference type="Pfam" id="PF13769">
    <property type="entry name" value="Virulence_fact"/>
    <property type="match status" value="1"/>
</dbReference>
<dbReference type="SMART" id="SM00567">
    <property type="entry name" value="EZ_HEAT"/>
    <property type="match status" value="3"/>
</dbReference>
<dbReference type="SMART" id="SM00932">
    <property type="entry name" value="Nfu_N"/>
    <property type="match status" value="1"/>
</dbReference>
<dbReference type="SUPFAM" id="SSF48371">
    <property type="entry name" value="ARM repeat"/>
    <property type="match status" value="1"/>
</dbReference>
<dbReference type="SUPFAM" id="SSF110836">
    <property type="entry name" value="Hypothetical protein SAV1430"/>
    <property type="match status" value="1"/>
</dbReference>
<organism>
    <name type="scientific">Staphylococcus aureus (strain bovine RF122 / ET3-1)</name>
    <dbReference type="NCBI Taxonomy" id="273036"/>
    <lineage>
        <taxon>Bacteria</taxon>
        <taxon>Bacillati</taxon>
        <taxon>Bacillota</taxon>
        <taxon>Bacilli</taxon>
        <taxon>Bacillales</taxon>
        <taxon>Staphylococcaceae</taxon>
        <taxon>Staphylococcus</taxon>
    </lineage>
</organism>
<feature type="chain" id="PRO_0000282302" description="Conserved virulence factor C">
    <location>
        <begin position="1"/>
        <end position="374"/>
    </location>
</feature>
<evidence type="ECO:0000250" key="1"/>
<evidence type="ECO:0000305" key="2"/>
<reference key="1">
    <citation type="journal article" date="2007" name="PLoS ONE">
        <title>Molecular correlates of host specialization in Staphylococcus aureus.</title>
        <authorList>
            <person name="Herron-Olson L."/>
            <person name="Fitzgerald J.R."/>
            <person name="Musser J.M."/>
            <person name="Kapur V."/>
        </authorList>
    </citation>
    <scope>NUCLEOTIDE SEQUENCE [LARGE SCALE GENOMIC DNA]</scope>
    <source>
        <strain>bovine RF122 / ET3-1</strain>
    </source>
</reference>